<keyword id="KW-1003">Cell membrane</keyword>
<keyword id="KW-0472">Membrane</keyword>
<keyword id="KW-1185">Reference proteome</keyword>
<keyword id="KW-0812">Transmembrane</keyword>
<keyword id="KW-1133">Transmembrane helix</keyword>
<dbReference type="EMBL" id="AE000666">
    <property type="protein sequence ID" value="AAB85385.1"/>
    <property type="molecule type" value="Genomic_DNA"/>
</dbReference>
<dbReference type="PIR" id="E69218">
    <property type="entry name" value="E69218"/>
</dbReference>
<dbReference type="STRING" id="187420.MTH_887"/>
<dbReference type="PaxDb" id="187420-MTH_887"/>
<dbReference type="EnsemblBacteria" id="AAB85385">
    <property type="protein sequence ID" value="AAB85385"/>
    <property type="gene ID" value="MTH_887"/>
</dbReference>
<dbReference type="KEGG" id="mth:MTH_887"/>
<dbReference type="PATRIC" id="fig|187420.15.peg.871"/>
<dbReference type="HOGENOM" id="CLU_048072_1_1_2"/>
<dbReference type="InParanoid" id="O26973"/>
<dbReference type="Proteomes" id="UP000005223">
    <property type="component" value="Chromosome"/>
</dbReference>
<dbReference type="GO" id="GO:0005886">
    <property type="term" value="C:plasma membrane"/>
    <property type="evidence" value="ECO:0007669"/>
    <property type="project" value="UniProtKB-SubCell"/>
</dbReference>
<dbReference type="InterPro" id="IPR022791">
    <property type="entry name" value="L-PG_synthase/AglD"/>
</dbReference>
<dbReference type="NCBIfam" id="TIGR00374">
    <property type="entry name" value="flippase-like domain"/>
    <property type="match status" value="1"/>
</dbReference>
<dbReference type="PANTHER" id="PTHR39087">
    <property type="entry name" value="UPF0104 MEMBRANE PROTEIN MJ1595"/>
    <property type="match status" value="1"/>
</dbReference>
<dbReference type="PANTHER" id="PTHR39087:SF2">
    <property type="entry name" value="UPF0104 MEMBRANE PROTEIN MJ1595"/>
    <property type="match status" value="1"/>
</dbReference>
<dbReference type="Pfam" id="PF03706">
    <property type="entry name" value="LPG_synthase_TM"/>
    <property type="match status" value="1"/>
</dbReference>
<reference key="1">
    <citation type="journal article" date="1997" name="J. Bacteriol.">
        <title>Complete genome sequence of Methanobacterium thermoautotrophicum deltaH: functional analysis and comparative genomics.</title>
        <authorList>
            <person name="Smith D.R."/>
            <person name="Doucette-Stamm L.A."/>
            <person name="Deloughery C."/>
            <person name="Lee H.-M."/>
            <person name="Dubois J."/>
            <person name="Aldredge T."/>
            <person name="Bashirzadeh R."/>
            <person name="Blakely D."/>
            <person name="Cook R."/>
            <person name="Gilbert K."/>
            <person name="Harrison D."/>
            <person name="Hoang L."/>
            <person name="Keagle P."/>
            <person name="Lumm W."/>
            <person name="Pothier B."/>
            <person name="Qiu D."/>
            <person name="Spadafora R."/>
            <person name="Vicare R."/>
            <person name="Wang Y."/>
            <person name="Wierzbowski J."/>
            <person name="Gibson R."/>
            <person name="Jiwani N."/>
            <person name="Caruso A."/>
            <person name="Bush D."/>
            <person name="Safer H."/>
            <person name="Patwell D."/>
            <person name="Prabhakar S."/>
            <person name="McDougall S."/>
            <person name="Shimer G."/>
            <person name="Goyal A."/>
            <person name="Pietrovski S."/>
            <person name="Church G.M."/>
            <person name="Daniels C.J."/>
            <person name="Mao J.-I."/>
            <person name="Rice P."/>
            <person name="Noelling J."/>
            <person name="Reeve J.N."/>
        </authorList>
    </citation>
    <scope>NUCLEOTIDE SEQUENCE [LARGE SCALE GENOMIC DNA]</scope>
    <source>
        <strain>ATCC 29096 / DSM 1053 / JCM 10044 / NBRC 100330 / Delta H</strain>
    </source>
</reference>
<accession>O26973</accession>
<organism>
    <name type="scientific">Methanothermobacter thermautotrophicus (strain ATCC 29096 / DSM 1053 / JCM 10044 / NBRC 100330 / Delta H)</name>
    <name type="common">Methanobacterium thermoautotrophicum</name>
    <dbReference type="NCBI Taxonomy" id="187420"/>
    <lineage>
        <taxon>Archaea</taxon>
        <taxon>Methanobacteriati</taxon>
        <taxon>Methanobacteriota</taxon>
        <taxon>Methanomada group</taxon>
        <taxon>Methanobacteria</taxon>
        <taxon>Methanobacteriales</taxon>
        <taxon>Methanobacteriaceae</taxon>
        <taxon>Methanothermobacter</taxon>
    </lineage>
</organism>
<gene>
    <name type="ordered locus">MTH_887</name>
</gene>
<protein>
    <recommendedName>
        <fullName>UPF0104 membrane protein MTH_887</fullName>
    </recommendedName>
</protein>
<sequence>MVSMEESSVFDYIRENRRTIVLSFLAVAVVIFLIGFFAGFGDILRALEGTSPYFLALNFVLEAIILILWTLRWRLILNVVDDAPSFPRLMMLLFTSIFGNNITPGAAGGEPLRAYLLREVEGTPFEIGFASSTADRVFEFIPFALISILSAVLIMTWEISIWTRIVVSVLILVTIAGFSLAVYAGMNKKIAQRIALSVTRRLVSWFSRFREGGISFAGIHEKVIFYINRFNDGFSTAITDRRVFVIGFFISLGMWALDVCRLYVCFLAVGVSPPAVPLIIIYTVGILISLLPILPGSLGLREGILVGLFAVAGIGADYVMAASVVDRIASYIAPTLIGLIAAIYYGKQMTS</sequence>
<evidence type="ECO:0000255" key="1"/>
<evidence type="ECO:0000305" key="2"/>
<feature type="chain" id="PRO_0000138107" description="UPF0104 membrane protein MTH_887">
    <location>
        <begin position="1"/>
        <end position="351"/>
    </location>
</feature>
<feature type="transmembrane region" description="Helical" evidence="1">
    <location>
        <begin position="20"/>
        <end position="40"/>
    </location>
</feature>
<feature type="transmembrane region" description="Helical" evidence="1">
    <location>
        <begin position="51"/>
        <end position="71"/>
    </location>
</feature>
<feature type="transmembrane region" description="Helical" evidence="1">
    <location>
        <begin position="137"/>
        <end position="157"/>
    </location>
</feature>
<feature type="transmembrane region" description="Helical" evidence="1">
    <location>
        <begin position="165"/>
        <end position="185"/>
    </location>
</feature>
<feature type="transmembrane region" description="Helical" evidence="1">
    <location>
        <begin position="244"/>
        <end position="264"/>
    </location>
</feature>
<feature type="transmembrane region" description="Helical" evidence="1">
    <location>
        <begin position="275"/>
        <end position="295"/>
    </location>
</feature>
<feature type="transmembrane region" description="Helical" evidence="1">
    <location>
        <begin position="304"/>
        <end position="324"/>
    </location>
</feature>
<feature type="transmembrane region" description="Helical" evidence="1">
    <location>
        <begin position="328"/>
        <end position="348"/>
    </location>
</feature>
<name>Y887_METTH</name>
<comment type="subcellular location">
    <subcellularLocation>
        <location evidence="2">Cell membrane</location>
        <topology evidence="2">Multi-pass membrane protein</topology>
    </subcellularLocation>
</comment>
<comment type="similarity">
    <text evidence="2">Belongs to the UPF0104 family.</text>
</comment>
<proteinExistence type="inferred from homology"/>